<dbReference type="EC" id="3.1.26.5" evidence="1"/>
<dbReference type="EMBL" id="AE009951">
    <property type="protein sequence ID" value="AAL94215.1"/>
    <property type="molecule type" value="Genomic_DNA"/>
</dbReference>
<dbReference type="RefSeq" id="NP_602916.1">
    <property type="nucleotide sequence ID" value="NC_003454.1"/>
</dbReference>
<dbReference type="RefSeq" id="WP_011016064.1">
    <property type="nucleotide sequence ID" value="NZ_OZ209243.1"/>
</dbReference>
<dbReference type="SMR" id="Q8RHA6"/>
<dbReference type="FunCoup" id="Q8RHA6">
    <property type="interactions" value="192"/>
</dbReference>
<dbReference type="STRING" id="190304.FN0002"/>
<dbReference type="PaxDb" id="190304-FN0002"/>
<dbReference type="EnsemblBacteria" id="AAL94215">
    <property type="protein sequence ID" value="AAL94215"/>
    <property type="gene ID" value="FN0002"/>
</dbReference>
<dbReference type="GeneID" id="79782865"/>
<dbReference type="KEGG" id="fnu:FN0002"/>
<dbReference type="PATRIC" id="fig|190304.8.peg.594"/>
<dbReference type="eggNOG" id="COG0594">
    <property type="taxonomic scope" value="Bacteria"/>
</dbReference>
<dbReference type="HOGENOM" id="CLU_117179_9_3_0"/>
<dbReference type="InParanoid" id="Q8RHA6"/>
<dbReference type="BioCyc" id="FNUC190304:G1FZS-616-MONOMER"/>
<dbReference type="Proteomes" id="UP000002521">
    <property type="component" value="Chromosome"/>
</dbReference>
<dbReference type="GO" id="GO:0030677">
    <property type="term" value="C:ribonuclease P complex"/>
    <property type="evidence" value="ECO:0000318"/>
    <property type="project" value="GO_Central"/>
</dbReference>
<dbReference type="GO" id="GO:0042781">
    <property type="term" value="F:3'-tRNA processing endoribonuclease activity"/>
    <property type="evidence" value="ECO:0000318"/>
    <property type="project" value="GO_Central"/>
</dbReference>
<dbReference type="GO" id="GO:0004526">
    <property type="term" value="F:ribonuclease P activity"/>
    <property type="evidence" value="ECO:0000318"/>
    <property type="project" value="GO_Central"/>
</dbReference>
<dbReference type="GO" id="GO:0000049">
    <property type="term" value="F:tRNA binding"/>
    <property type="evidence" value="ECO:0007669"/>
    <property type="project" value="UniProtKB-UniRule"/>
</dbReference>
<dbReference type="GO" id="GO:0042780">
    <property type="term" value="P:tRNA 3'-end processing"/>
    <property type="evidence" value="ECO:0000318"/>
    <property type="project" value="GO_Central"/>
</dbReference>
<dbReference type="GO" id="GO:0001682">
    <property type="term" value="P:tRNA 5'-leader removal"/>
    <property type="evidence" value="ECO:0007669"/>
    <property type="project" value="UniProtKB-UniRule"/>
</dbReference>
<dbReference type="FunFam" id="3.30.230.10:FF:000209">
    <property type="entry name" value="Ribonuclease P protein component"/>
    <property type="match status" value="1"/>
</dbReference>
<dbReference type="Gene3D" id="3.30.230.10">
    <property type="match status" value="1"/>
</dbReference>
<dbReference type="HAMAP" id="MF_00227">
    <property type="entry name" value="RNase_P"/>
    <property type="match status" value="1"/>
</dbReference>
<dbReference type="InterPro" id="IPR020568">
    <property type="entry name" value="Ribosomal_Su5_D2-typ_SF"/>
</dbReference>
<dbReference type="InterPro" id="IPR014721">
    <property type="entry name" value="Ribsml_uS5_D2-typ_fold_subgr"/>
</dbReference>
<dbReference type="InterPro" id="IPR000100">
    <property type="entry name" value="RNase_P"/>
</dbReference>
<dbReference type="NCBIfam" id="TIGR00188">
    <property type="entry name" value="rnpA"/>
    <property type="match status" value="1"/>
</dbReference>
<dbReference type="PANTHER" id="PTHR33992">
    <property type="entry name" value="RIBONUCLEASE P PROTEIN COMPONENT"/>
    <property type="match status" value="1"/>
</dbReference>
<dbReference type="PANTHER" id="PTHR33992:SF1">
    <property type="entry name" value="RIBONUCLEASE P PROTEIN COMPONENT"/>
    <property type="match status" value="1"/>
</dbReference>
<dbReference type="Pfam" id="PF00825">
    <property type="entry name" value="Ribonuclease_P"/>
    <property type="match status" value="1"/>
</dbReference>
<dbReference type="SUPFAM" id="SSF54211">
    <property type="entry name" value="Ribosomal protein S5 domain 2-like"/>
    <property type="match status" value="1"/>
</dbReference>
<organism>
    <name type="scientific">Fusobacterium nucleatum subsp. nucleatum (strain ATCC 25586 / DSM 15643 / BCRC 10681 / CIP 101130 / JCM 8532 / KCTC 2640 / LMG 13131 / VPI 4355)</name>
    <dbReference type="NCBI Taxonomy" id="190304"/>
    <lineage>
        <taxon>Bacteria</taxon>
        <taxon>Fusobacteriati</taxon>
        <taxon>Fusobacteriota</taxon>
        <taxon>Fusobacteriia</taxon>
        <taxon>Fusobacteriales</taxon>
        <taxon>Fusobacteriaceae</taxon>
        <taxon>Fusobacterium</taxon>
    </lineage>
</organism>
<comment type="function">
    <text evidence="1">RNaseP catalyzes the removal of the 5'-leader sequence from pre-tRNA to produce the mature 5'-terminus. It can also cleave other RNA substrates such as 4.5S RNA. The protein component plays an auxiliary but essential role in vivo by binding to the 5'-leader sequence and broadening the substrate specificity of the ribozyme.</text>
</comment>
<comment type="catalytic activity">
    <reaction evidence="1">
        <text>Endonucleolytic cleavage of RNA, removing 5'-extranucleotides from tRNA precursor.</text>
        <dbReference type="EC" id="3.1.26.5"/>
    </reaction>
</comment>
<comment type="subunit">
    <text evidence="1">Consists of a catalytic RNA component (M1 or rnpB) and a protein subunit.</text>
</comment>
<comment type="similarity">
    <text evidence="1">Belongs to the RnpA family.</text>
</comment>
<protein>
    <recommendedName>
        <fullName evidence="1">Ribonuclease P protein component</fullName>
        <shortName evidence="1">RNase P protein</shortName>
        <shortName evidence="1">RNaseP protein</shortName>
        <ecNumber evidence="1">3.1.26.5</ecNumber>
    </recommendedName>
    <alternativeName>
        <fullName evidence="1">Protein C5</fullName>
    </alternativeName>
</protein>
<feature type="chain" id="PRO_0000198463" description="Ribonuclease P protein component">
    <location>
        <begin position="1"/>
        <end position="111"/>
    </location>
</feature>
<evidence type="ECO:0000255" key="1">
    <source>
        <dbReference type="HAMAP-Rule" id="MF_00227"/>
    </source>
</evidence>
<reference key="1">
    <citation type="journal article" date="2002" name="J. Bacteriol.">
        <title>Genome sequence and analysis of the oral bacterium Fusobacterium nucleatum strain ATCC 25586.</title>
        <authorList>
            <person name="Kapatral V."/>
            <person name="Anderson I."/>
            <person name="Ivanova N."/>
            <person name="Reznik G."/>
            <person name="Los T."/>
            <person name="Lykidis A."/>
            <person name="Bhattacharyya A."/>
            <person name="Bartman A."/>
            <person name="Gardner W."/>
            <person name="Grechkin G."/>
            <person name="Zhu L."/>
            <person name="Vasieva O."/>
            <person name="Chu L."/>
            <person name="Kogan Y."/>
            <person name="Chaga O."/>
            <person name="Goltsman E."/>
            <person name="Bernal A."/>
            <person name="Larsen N."/>
            <person name="D'Souza M."/>
            <person name="Walunas T."/>
            <person name="Pusch G."/>
            <person name="Haselkorn R."/>
            <person name="Fonstein M."/>
            <person name="Kyrpides N.C."/>
            <person name="Overbeek R."/>
        </authorList>
    </citation>
    <scope>NUCLEOTIDE SEQUENCE [LARGE SCALE GENOMIC DNA]</scope>
    <source>
        <strain>ATCC 25586 / DSM 15643 / BCRC 10681 / CIP 101130 / JCM 8532 / KCTC 2640 / LMG 13131 / VPI 4355</strain>
    </source>
</reference>
<name>RNPA_FUSNN</name>
<proteinExistence type="inferred from homology"/>
<keyword id="KW-0255">Endonuclease</keyword>
<keyword id="KW-0378">Hydrolase</keyword>
<keyword id="KW-0540">Nuclease</keyword>
<keyword id="KW-1185">Reference proteome</keyword>
<keyword id="KW-0694">RNA-binding</keyword>
<keyword id="KW-0819">tRNA processing</keyword>
<accession>Q8RHA6</accession>
<gene>
    <name evidence="1" type="primary">rnpA</name>
    <name type="ordered locus">FN0002</name>
</gene>
<sequence>MNTLKKNGEFQNIYNLGNKYFGNYSLIFFNKNKLEYSRFGFIASKKVGKAFCRNRIKRLFREYIRLNINKINDNYDIIIVAKKKFGENIEDLKYKDIEKDLNRVFKNSKII</sequence>